<organism>
    <name type="scientific">Bos taurus</name>
    <name type="common">Bovine</name>
    <dbReference type="NCBI Taxonomy" id="9913"/>
    <lineage>
        <taxon>Eukaryota</taxon>
        <taxon>Metazoa</taxon>
        <taxon>Chordata</taxon>
        <taxon>Craniata</taxon>
        <taxon>Vertebrata</taxon>
        <taxon>Euteleostomi</taxon>
        <taxon>Mammalia</taxon>
        <taxon>Eutheria</taxon>
        <taxon>Laurasiatheria</taxon>
        <taxon>Artiodactyla</taxon>
        <taxon>Ruminantia</taxon>
        <taxon>Pecora</taxon>
        <taxon>Bovidae</taxon>
        <taxon>Bovinae</taxon>
        <taxon>Bos</taxon>
    </lineage>
</organism>
<evidence type="ECO:0000250" key="1"/>
<evidence type="ECO:0000250" key="2">
    <source>
        <dbReference type="UniProtKB" id="Q7Z392"/>
    </source>
</evidence>
<evidence type="ECO:0000305" key="3"/>
<feature type="chain" id="PRO_0000348071" description="Trafficking protein particle complex subunit 11">
    <location>
        <begin position="1"/>
        <end position="1133"/>
    </location>
</feature>
<feature type="modified residue" description="N6-acetyllysine" evidence="2">
    <location>
        <position position="245"/>
    </location>
</feature>
<accession>A6QLC7</accession>
<protein>
    <recommendedName>
        <fullName>Trafficking protein particle complex subunit 11</fullName>
    </recommendedName>
</protein>
<name>TPC11_BOVIN</name>
<proteinExistence type="evidence at transcript level"/>
<gene>
    <name type="primary">TRAPPC11</name>
</gene>
<dbReference type="EMBL" id="BC147917">
    <property type="protein sequence ID" value="AAI47918.1"/>
    <property type="molecule type" value="mRNA"/>
</dbReference>
<dbReference type="RefSeq" id="NP_001095667.1">
    <property type="nucleotide sequence ID" value="NM_001102197.1"/>
</dbReference>
<dbReference type="SMR" id="A6QLC7"/>
<dbReference type="FunCoup" id="A6QLC7">
    <property type="interactions" value="4907"/>
</dbReference>
<dbReference type="STRING" id="9913.ENSBTAP00000009769"/>
<dbReference type="PaxDb" id="9913-ENSBTAP00000009769"/>
<dbReference type="GeneID" id="537211"/>
<dbReference type="KEGG" id="bta:537211"/>
<dbReference type="CTD" id="60684"/>
<dbReference type="eggNOG" id="KOG4386">
    <property type="taxonomic scope" value="Eukaryota"/>
</dbReference>
<dbReference type="InParanoid" id="A6QLC7"/>
<dbReference type="OrthoDB" id="6278596at2759"/>
<dbReference type="Proteomes" id="UP000009136">
    <property type="component" value="Unplaced"/>
</dbReference>
<dbReference type="GO" id="GO:0005794">
    <property type="term" value="C:Golgi apparatus"/>
    <property type="evidence" value="ECO:0007669"/>
    <property type="project" value="UniProtKB-SubCell"/>
</dbReference>
<dbReference type="GO" id="GO:0016192">
    <property type="term" value="P:vesicle-mediated transport"/>
    <property type="evidence" value="ECO:0007669"/>
    <property type="project" value="UniProtKB-KW"/>
</dbReference>
<dbReference type="InterPro" id="IPR021773">
    <property type="entry name" value="TPC11"/>
</dbReference>
<dbReference type="InterPro" id="IPR025876">
    <property type="entry name" value="TRAPPC11_C"/>
</dbReference>
<dbReference type="PANTHER" id="PTHR14374">
    <property type="entry name" value="FOIE GRAS"/>
    <property type="match status" value="1"/>
</dbReference>
<dbReference type="PANTHER" id="PTHR14374:SF0">
    <property type="entry name" value="TRAFFICKING PROTEIN PARTICLE COMPLEX SUBUNIT 11"/>
    <property type="match status" value="1"/>
</dbReference>
<dbReference type="Pfam" id="PF11817">
    <property type="entry name" value="Foie-gras_1"/>
    <property type="match status" value="1"/>
</dbReference>
<dbReference type="Pfam" id="PF12742">
    <property type="entry name" value="Gryzun-like"/>
    <property type="match status" value="1"/>
</dbReference>
<reference key="1">
    <citation type="submission" date="2007-06" db="EMBL/GenBank/DDBJ databases">
        <authorList>
            <consortium name="NIH - Mammalian Gene Collection (MGC) project"/>
        </authorList>
    </citation>
    <scope>NUCLEOTIDE SEQUENCE [LARGE SCALE MRNA]</scope>
    <source>
        <strain>Hereford</strain>
        <tissue>Fetal skin</tissue>
    </source>
</reference>
<sequence length="1133" mass="128272">MSPTQWDFPVELCCRPMAFVTLTGLDVVYNAVHRAVWDAFCANRRADRVPISFKVLPGDHEYPKCRPKRTSYEWYIPKGILKTGWMNKHLNLVPALVVVFYELDWDEPQWKEKQSECATRVEIVRQSLQGRNTKVAVVLIQKKTPLPPGEDVIASERAAALCNACELSGKSLFVLPHTDHLVGYIIRLENAFYEHAQTYYYTEIRRVKSHKEFLNKTTHQLLFVRHQFKIAFFSELKQDTQNALKNYRTAYNLVHELRAHETNILEIKTMAGFINYKICRLCFQHNTPLDAIAQFRKHIDLCKKKIGSAELAFEHAAWMSKQFQAFGDLFDEAIKLGLTAIQTQNPGFYYQQAAYYAQERKQLAKALCNHEASVTYPNPDPLETQAGVLDFYGQRSWRQGVLSFDLSDPEKEKVGILAIQLKERSVVHSEVIITLLSNAVAQFKKYKCPRMKSHLMVQMGEEYYYAKDYTKALKLLDYVMCDYRSEGWWTLLTSILTTALKCSYLMAQLKDYITYSLELLGRASTLKDDQKSRIEKNLINVLMNESPDPEPDCDILAVKTAQKLWVDRISLAGSNVFTIGVQDFVPFVQCKAKFHAPSFHVDVPVQFDVYLKADCPHPIRFSKLCISFNNQEYNQFCVIEEASKASDVLENLTQGKMCLVPGKTRKFLFKFVAKTEDVGKKIEITSVDLVLGSEAGRCVVLNWQGGGGDAASAQEALQASRSFKRRPRLPDSEVHWDGIVIQASTMIISRVPNISVHLRHDPPALTNEMYCLVVTVQSHEKSPIRDVKLTAGLKPGQDANLTQKTHVTLHGTELCDESYPALLTDIPIGDLQPGEQLEKAVYVRCGTVGSRMFLVYVSYLINTAIEGKETVCKCHKDETVTIETVFPFDVAVKFVSTKFEHLERVYADIPFLLMTDLLSASPWALTIVSSELQLAPSMTPVDQLESQVDRVVLQTGESASECFCLRCPSVGNVEGGVATGHYVISWKRTSATDGVPVISTVITLPHVIVENIPLHVNADLPSFGRVRESLPVRYHLQNKTDLVQDVEISVEPSDAFMFSGLKQIRLRILPGTEQEMLYNFYPLMAGYQQLPSLNINLLRFPNFTNQLLRRFIPTSIFVKPQGRLVDDASIAAA</sequence>
<comment type="function">
    <text evidence="1">Involved in endoplasmic reticulum to Golgi apparatus trafficking at a very early stage.</text>
</comment>
<comment type="subunit">
    <text evidence="1">Component of the multisubunit TRAPP (transport protein particle) complex, which includes at least TRAPPC2, TRAPPC2L, TRAPPC3, TRAPPC3L, TRAPPC4, TRAPPC5, TRAPPC8, TRAPPC9, TRAPPC10, TRAPPC11 and TRAPPC12.</text>
</comment>
<comment type="subcellular location">
    <subcellularLocation>
        <location evidence="2">Golgi apparatus</location>
    </subcellularLocation>
    <subcellularLocation>
        <location evidence="1">Golgi apparatus</location>
        <location evidence="1">cis-Golgi network</location>
    </subcellularLocation>
</comment>
<comment type="similarity">
    <text evidence="3">Belongs to the TRAPPC11 family.</text>
</comment>
<keyword id="KW-0007">Acetylation</keyword>
<keyword id="KW-0931">ER-Golgi transport</keyword>
<keyword id="KW-0333">Golgi apparatus</keyword>
<keyword id="KW-1185">Reference proteome</keyword>
<keyword id="KW-0813">Transport</keyword>